<sequence length="79" mass="9109">MEEQVLSLLEELCEDEVVREDLDINLRDEGLLDSLGFVEMLVRMEEVFGFATAPTEVTYEEIDTPRRVMAYVKKRVAAL</sequence>
<comment type="function">
    <text evidence="1">Carrier protein involved in the D-alanylation of lipoteichoic acid (LTA). The loading of thioester-linked D-alanine onto DltC is catalyzed by D-alanine--D-alanyl carrier protein ligase DltA. The DltC-carried D-alanyl group is further transferred to cell membrane phosphatidylglycerol (PG) by forming an ester bond, probably catalyzed by DltD. D-alanylation of LTA plays an important role in modulating the properties of the cell wall in Gram-positive bacteria, influencing the net charge of the cell wall.</text>
</comment>
<comment type="pathway">
    <text evidence="1">Cell wall biogenesis; lipoteichoic acid biosynthesis.</text>
</comment>
<comment type="subcellular location">
    <subcellularLocation>
        <location evidence="1">Cytoplasm</location>
    </subcellularLocation>
</comment>
<comment type="PTM">
    <text evidence="1">4'-phosphopantetheine is transferred from CoA to a specific serine of apo-DCP.</text>
</comment>
<comment type="similarity">
    <text evidence="1">Belongs to the DltC family.</text>
</comment>
<keyword id="KW-0961">Cell wall biogenesis/degradation</keyword>
<keyword id="KW-0963">Cytoplasm</keyword>
<keyword id="KW-0596">Phosphopantetheine</keyword>
<keyword id="KW-0597">Phosphoprotein</keyword>
<accession>Q8GR69</accession>
<dbReference type="EMBL" id="AB091384">
    <property type="protein sequence ID" value="BAC15548.1"/>
    <property type="molecule type" value="Genomic_DNA"/>
</dbReference>
<dbReference type="RefSeq" id="WP_023391588.1">
    <property type="nucleotide sequence ID" value="NZ_JAKUYY010000005.1"/>
</dbReference>
<dbReference type="SMR" id="Q8GR69"/>
<dbReference type="GeneID" id="84817487"/>
<dbReference type="UniPathway" id="UPA00556"/>
<dbReference type="GO" id="GO:0005737">
    <property type="term" value="C:cytoplasm"/>
    <property type="evidence" value="ECO:0007669"/>
    <property type="project" value="UniProtKB-SubCell"/>
</dbReference>
<dbReference type="GO" id="GO:0036370">
    <property type="term" value="F:D-alanyl carrier activity"/>
    <property type="evidence" value="ECO:0007669"/>
    <property type="project" value="UniProtKB-UniRule"/>
</dbReference>
<dbReference type="GO" id="GO:0071555">
    <property type="term" value="P:cell wall organization"/>
    <property type="evidence" value="ECO:0007669"/>
    <property type="project" value="UniProtKB-KW"/>
</dbReference>
<dbReference type="GO" id="GO:0070395">
    <property type="term" value="P:lipoteichoic acid biosynthetic process"/>
    <property type="evidence" value="ECO:0007669"/>
    <property type="project" value="UniProtKB-UniRule"/>
</dbReference>
<dbReference type="Gene3D" id="1.10.1200.10">
    <property type="entry name" value="ACP-like"/>
    <property type="match status" value="1"/>
</dbReference>
<dbReference type="HAMAP" id="MF_00565">
    <property type="entry name" value="DltC"/>
    <property type="match status" value="1"/>
</dbReference>
<dbReference type="InterPro" id="IPR036736">
    <property type="entry name" value="ACP-like_sf"/>
</dbReference>
<dbReference type="InterPro" id="IPR003230">
    <property type="entry name" value="DltC"/>
</dbReference>
<dbReference type="InterPro" id="IPR009081">
    <property type="entry name" value="PP-bd_ACP"/>
</dbReference>
<dbReference type="NCBIfam" id="TIGR01688">
    <property type="entry name" value="dltC"/>
    <property type="match status" value="1"/>
</dbReference>
<dbReference type="Pfam" id="PF00550">
    <property type="entry name" value="PP-binding"/>
    <property type="match status" value="1"/>
</dbReference>
<dbReference type="SUPFAM" id="SSF47336">
    <property type="entry name" value="ACP-like"/>
    <property type="match status" value="1"/>
</dbReference>
<dbReference type="PROSITE" id="PS50075">
    <property type="entry name" value="CARRIER"/>
    <property type="match status" value="1"/>
</dbReference>
<feature type="chain" id="PRO_0000213081" description="D-alanyl carrier protein">
    <location>
        <begin position="1"/>
        <end position="79"/>
    </location>
</feature>
<feature type="domain" description="Carrier" evidence="1">
    <location>
        <begin position="1"/>
        <end position="76"/>
    </location>
</feature>
<feature type="modified residue" description="O-(pantetheine 4'-phosphoryl)serine" evidence="1">
    <location>
        <position position="34"/>
    </location>
</feature>
<reference key="1">
    <citation type="submission" date="2002-09" db="EMBL/GenBank/DDBJ databases">
        <title>Oligonucleotide sequences specific to Abiotrophia defectiva for PCR.</title>
        <authorList>
            <person name="Sato S."/>
        </authorList>
    </citation>
    <scope>NUCLEOTIDE SEQUENCE [GENOMIC DNA]</scope>
    <source>
        <strain>YTS2</strain>
    </source>
</reference>
<organism>
    <name type="scientific">Abiotrophia defectiva</name>
    <name type="common">Streptococcus defectivus</name>
    <dbReference type="NCBI Taxonomy" id="46125"/>
    <lineage>
        <taxon>Bacteria</taxon>
        <taxon>Bacillati</taxon>
        <taxon>Bacillota</taxon>
        <taxon>Bacilli</taxon>
        <taxon>Lactobacillales</taxon>
        <taxon>Aerococcaceae</taxon>
        <taxon>Abiotrophia</taxon>
    </lineage>
</organism>
<evidence type="ECO:0000255" key="1">
    <source>
        <dbReference type="HAMAP-Rule" id="MF_00565"/>
    </source>
</evidence>
<name>DLTC_ABIDE</name>
<protein>
    <recommendedName>
        <fullName evidence="1">D-alanyl carrier protein</fullName>
        <shortName evidence="1">DCP</shortName>
    </recommendedName>
    <alternativeName>
        <fullName evidence="1">D-alanine--poly(phosphoribitol) ligase subunit 2</fullName>
    </alternativeName>
</protein>
<proteinExistence type="inferred from homology"/>
<gene>
    <name evidence="1" type="primary">dltC</name>
</gene>